<feature type="chain" id="PRO_0000087235" description="Ferric siderophore reductase">
    <location>
        <begin position="1"/>
        <end position="262"/>
    </location>
</feature>
<feature type="binding site" evidence="5">
    <location>
        <position position="244"/>
    </location>
    <ligand>
        <name>[2Fe-2S] cluster</name>
        <dbReference type="ChEBI" id="CHEBI:190135"/>
    </ligand>
</feature>
<feature type="binding site" evidence="5">
    <location>
        <position position="245"/>
    </location>
    <ligand>
        <name>[2Fe-2S] cluster</name>
        <dbReference type="ChEBI" id="CHEBI:190135"/>
    </ligand>
</feature>
<feature type="binding site" evidence="5">
    <location>
        <position position="256"/>
    </location>
    <ligand>
        <name>[2Fe-2S] cluster</name>
        <dbReference type="ChEBI" id="CHEBI:190135"/>
    </ligand>
</feature>
<feature type="binding site" evidence="5">
    <location>
        <position position="259"/>
    </location>
    <ligand>
        <name>[2Fe-2S] cluster</name>
        <dbReference type="ChEBI" id="CHEBI:190135"/>
    </ligand>
</feature>
<feature type="mutagenesis site" description="Does not affect [2Fe-2S] cluster." evidence="5">
    <original>C</original>
    <variation>S</variation>
    <location>
        <position position="137"/>
    </location>
</feature>
<feature type="mutagenesis site" description="Does not affect [2Fe-2S] cluster." evidence="5">
    <original>C</original>
    <variation>S</variation>
    <location>
        <position position="143"/>
    </location>
</feature>
<feature type="mutagenesis site" description="Loss of activity. Affects [2Fe-2S] cluster binding." evidence="5">
    <original>C</original>
    <variation>S</variation>
    <location>
        <position position="244"/>
    </location>
</feature>
<feature type="mutagenesis site" description="Loss of activity. Affects [2Fe-2S] cluster binding." evidence="5">
    <original>C</original>
    <variation>S</variation>
    <location>
        <position position="245"/>
    </location>
</feature>
<feature type="mutagenesis site" description="Loss of activity. Affects [2Fe-2S] cluster binding." evidence="5">
    <original>C</original>
    <variation>S</variation>
    <location>
        <position position="256"/>
    </location>
</feature>
<feature type="mutagenesis site" description="Loss of activity. Affects [2Fe-2S] cluster binding." evidence="5">
    <original>C</original>
    <variation>S</variation>
    <location>
        <position position="259"/>
    </location>
</feature>
<feature type="helix" evidence="8">
    <location>
        <begin position="25"/>
        <end position="36"/>
    </location>
</feature>
<feature type="helix" evidence="8">
    <location>
        <begin position="38"/>
        <end position="42"/>
    </location>
</feature>
<feature type="strand" evidence="8">
    <location>
        <begin position="43"/>
        <end position="47"/>
    </location>
</feature>
<feature type="helix" evidence="8">
    <location>
        <begin position="57"/>
        <end position="60"/>
    </location>
</feature>
<feature type="helix" evidence="8">
    <location>
        <begin position="63"/>
        <end position="77"/>
    </location>
</feature>
<feature type="turn" evidence="8">
    <location>
        <begin position="78"/>
        <end position="80"/>
    </location>
</feature>
<feature type="strand" evidence="8">
    <location>
        <begin position="82"/>
        <end position="84"/>
    </location>
</feature>
<feature type="helix" evidence="8">
    <location>
        <begin position="88"/>
        <end position="112"/>
    </location>
</feature>
<feature type="helix" evidence="8">
    <location>
        <begin position="122"/>
        <end position="124"/>
    </location>
</feature>
<feature type="strand" evidence="8">
    <location>
        <begin position="125"/>
        <end position="129"/>
    </location>
</feature>
<feature type="strand" evidence="8">
    <location>
        <begin position="133"/>
        <end position="140"/>
    </location>
</feature>
<feature type="turn" evidence="8">
    <location>
        <begin position="146"/>
        <end position="150"/>
    </location>
</feature>
<feature type="helix" evidence="8">
    <location>
        <begin position="153"/>
        <end position="163"/>
    </location>
</feature>
<feature type="helix" evidence="8">
    <location>
        <begin position="166"/>
        <end position="173"/>
    </location>
</feature>
<feature type="strand" evidence="8">
    <location>
        <begin position="176"/>
        <end position="178"/>
    </location>
</feature>
<feature type="helix" evidence="8">
    <location>
        <begin position="180"/>
        <end position="197"/>
    </location>
</feature>
<feature type="helix" evidence="8">
    <location>
        <begin position="199"/>
        <end position="202"/>
    </location>
</feature>
<feature type="helix" evidence="8">
    <location>
        <begin position="204"/>
        <end position="215"/>
    </location>
</feature>
<feature type="strand" evidence="8">
    <location>
        <begin position="223"/>
        <end position="225"/>
    </location>
</feature>
<feature type="turn" evidence="8">
    <location>
        <begin position="227"/>
        <end position="230"/>
    </location>
</feature>
<feature type="strand" evidence="8">
    <location>
        <begin position="231"/>
        <end position="235"/>
    </location>
</feature>
<feature type="strand" evidence="8">
    <location>
        <begin position="238"/>
        <end position="243"/>
    </location>
</feature>
<feature type="helix" evidence="8">
    <location>
        <begin position="247"/>
        <end position="249"/>
    </location>
</feature>
<sequence>MAYRSAPLYEDVIWRTHLQPQDPTLAQAVRATIAKHREHLLEFIRLDEPAPLNAMTLAQWSSPNVLSSLLAVYSDHIYRNQPMMIRENKPLISLWAQWYIGLMVPPLMLALLTQEKALDVSPEHFHAEFHETGRVACFWVDVCEDKNATPHSPQHRMETLISQALVPVVQALEATGEINGKLIWSNTGYLINWYLTEMKQLLGEATVESLRHALFFEKTLTNGEDNPLWRTVVLRDGLLVRRTCCQRYRLPDVQQCGDCTLK</sequence>
<evidence type="ECO:0000269" key="1">
    <source>
    </source>
</evidence>
<evidence type="ECO:0000269" key="2">
    <source>
    </source>
</evidence>
<evidence type="ECO:0000269" key="3">
    <source>
    </source>
</evidence>
<evidence type="ECO:0000269" key="4">
    <source>
    </source>
</evidence>
<evidence type="ECO:0000269" key="5">
    <source>
    </source>
</evidence>
<evidence type="ECO:0000303" key="6">
    <source>
    </source>
</evidence>
<evidence type="ECO:0000305" key="7"/>
<evidence type="ECO:0007829" key="8">
    <source>
        <dbReference type="PDB" id="7QP5"/>
    </source>
</evidence>
<keyword id="KW-0001">2Fe-2S</keyword>
<keyword id="KW-0002">3D-structure</keyword>
<keyword id="KW-0997">Cell inner membrane</keyword>
<keyword id="KW-1003">Cell membrane</keyword>
<keyword id="KW-0963">Cytoplasm</keyword>
<keyword id="KW-0408">Iron</keyword>
<keyword id="KW-0411">Iron-sulfur</keyword>
<keyword id="KW-0472">Membrane</keyword>
<keyword id="KW-0479">Metal-binding</keyword>
<keyword id="KW-0560">Oxidoreductase</keyword>
<keyword id="KW-1185">Reference proteome</keyword>
<name>FHUF_ECOLI</name>
<protein>
    <recommendedName>
        <fullName evidence="6">Ferric siderophore reductase</fullName>
    </recommendedName>
    <alternativeName>
        <fullName evidence="7">Ferric iron reductase protein FhuF</fullName>
    </alternativeName>
</protein>
<reference key="1">
    <citation type="journal article" date="1995" name="Nucleic Acids Res.">
        <title>Analysis of the Escherichia coli genome VI: DNA sequence of the region from 92.8 through 100 minutes.</title>
        <authorList>
            <person name="Burland V.D."/>
            <person name="Plunkett G. III"/>
            <person name="Sofia H.J."/>
            <person name="Daniels D.L."/>
            <person name="Blattner F.R."/>
        </authorList>
    </citation>
    <scope>NUCLEOTIDE SEQUENCE [LARGE SCALE GENOMIC DNA]</scope>
    <source>
        <strain>K12 / MG1655 / ATCC 47076</strain>
    </source>
</reference>
<reference key="2">
    <citation type="journal article" date="1997" name="Science">
        <title>The complete genome sequence of Escherichia coli K-12.</title>
        <authorList>
            <person name="Blattner F.R."/>
            <person name="Plunkett G. III"/>
            <person name="Bloch C.A."/>
            <person name="Perna N.T."/>
            <person name="Burland V."/>
            <person name="Riley M."/>
            <person name="Collado-Vides J."/>
            <person name="Glasner J.D."/>
            <person name="Rode C.K."/>
            <person name="Mayhew G.F."/>
            <person name="Gregor J."/>
            <person name="Davis N.W."/>
            <person name="Kirkpatrick H.A."/>
            <person name="Goeden M.A."/>
            <person name="Rose D.J."/>
            <person name="Mau B."/>
            <person name="Shao Y."/>
        </authorList>
    </citation>
    <scope>NUCLEOTIDE SEQUENCE [LARGE SCALE GENOMIC DNA]</scope>
    <source>
        <strain>K12 / MG1655 / ATCC 47076</strain>
    </source>
</reference>
<reference key="3">
    <citation type="journal article" date="2006" name="Mol. Syst. Biol.">
        <title>Highly accurate genome sequences of Escherichia coli K-12 strains MG1655 and W3110.</title>
        <authorList>
            <person name="Hayashi K."/>
            <person name="Morooka N."/>
            <person name="Yamamoto Y."/>
            <person name="Fujita K."/>
            <person name="Isono K."/>
            <person name="Choi S."/>
            <person name="Ohtsubo E."/>
            <person name="Baba T."/>
            <person name="Wanner B.L."/>
            <person name="Mori H."/>
            <person name="Horiuchi T."/>
        </authorList>
    </citation>
    <scope>NUCLEOTIDE SEQUENCE [LARGE SCALE GENOMIC DNA]</scope>
    <source>
        <strain>K12 / W3110 / ATCC 27325 / DSM 5911</strain>
    </source>
</reference>
<reference key="4">
    <citation type="journal article" date="1998" name="Eur. J. Biochem.">
        <title>FhuF, an iron-regulated protein of Escherichia coli with a new type of 2Fe-2S center.</title>
        <authorList>
            <person name="Muller K."/>
            <person name="Matzanke B.F."/>
            <person name="Schunemann V."/>
            <person name="Trautwein A.X."/>
            <person name="Hantke K."/>
        </authorList>
    </citation>
    <scope>COFACTOR</scope>
    <scope>SUBCELLULAR LOCATION</scope>
    <scope>MUTAGENESIS OF CYS-137; CYS-143; CYS-244; CYS-245; CYS-256 AND CYS-259</scope>
</reference>
<reference key="5">
    <citation type="journal article" date="1999" name="J. Bacteriol.">
        <title>SufS is a NifS-like protein, and SufD is necessary for stability of the 2Fe-2S FhuF protein in Escherichia coli.</title>
        <authorList>
            <person name="Patzer S.I."/>
            <person name="Hantke K."/>
        </authorList>
    </citation>
    <scope>ACTIVITY REGULATION</scope>
</reference>
<reference key="6">
    <citation type="journal article" date="2004" name="Biochemistry">
        <title>FhuF, part of a siderophore-reductase system.</title>
        <authorList>
            <person name="Matzanke B.F."/>
            <person name="Anemueller S."/>
            <person name="Schuenemann V."/>
            <person name="Trautwein A.X."/>
            <person name="Hantke K."/>
        </authorList>
    </citation>
    <scope>FUNCTION</scope>
    <scope>DISRUPTION PHENOTYPE</scope>
</reference>
<reference key="7">
    <citation type="journal article" date="2009" name="Mol. Cell">
        <title>Hydroxyurea induces hydroxyl radical-mediated cell death in Escherichia coli.</title>
        <authorList>
            <person name="Davies B.W."/>
            <person name="Kohanski M.A."/>
            <person name="Simmons L.A."/>
            <person name="Winkler J.A."/>
            <person name="Collins J.J."/>
            <person name="Walker G.C."/>
        </authorList>
    </citation>
    <scope>INDUCTION BY HYDROXYUREA</scope>
    <source>
        <strain>K12 / MC4100 / ATCC 35695 / DSM 6574</strain>
    </source>
</reference>
<reference key="8">
    <citation type="journal article" date="2021" name="J. Biol. Inorg. Chem.">
        <title>Conjuring up a ghost: structural and functional characterization of FhuF, a ferric siderophore reductase from E. coli.</title>
        <authorList>
            <person name="Trindade I.B."/>
            <person name="Hernandez G."/>
            <person name="Lebegue E."/>
            <person name="Barriere F."/>
            <person name="Cordeiro T."/>
            <person name="Piccioli M."/>
            <person name="Louro R.O."/>
        </authorList>
    </citation>
    <scope>FUNCTION</scope>
    <scope>COFACTOR</scope>
    <scope>ACTIVITY REGULATION</scope>
    <scope>SUBUNIT</scope>
    <scope>DOMAIN</scope>
    <source>
        <strain>K12</strain>
    </source>
</reference>
<accession>P39405</accession>
<accession>Q2M5U9</accession>
<gene>
    <name type="primary">fhuF</name>
    <name type="synonym">yjjS</name>
    <name type="ordered locus">b4367</name>
    <name type="ordered locus">JW4331</name>
</gene>
<proteinExistence type="evidence at protein level"/>
<comment type="function">
    <text evidence="2 4">Siderophore-iron reductase which is involved in iron removal from the hydroxamate-type siderophores coprogen, ferrichrome and ferrioxamine B after their transport into the cell (PubMed:14756576). Binds both the iron-loaded and the apo forms of ferrichrome (PubMed:33559753).</text>
</comment>
<comment type="cofactor">
    <cofactor evidence="4 5">
        <name>[2Fe-2S] cluster</name>
        <dbReference type="ChEBI" id="CHEBI:190135"/>
    </cofactor>
    <text evidence="5">Binds 1 [2Fe-2S] cluster.</text>
</comment>
<comment type="activity regulation">
    <text evidence="1 4">Displays pH dependent redox properties (PubMed:33559753). SufD is necessary for the stability of FhuF (PubMed:10322040).</text>
</comment>
<comment type="subunit">
    <text evidence="4">Monomer.</text>
</comment>
<comment type="subcellular location">
    <subcellularLocation>
        <location evidence="5">Cytoplasm</location>
    </subcellularLocation>
    <subcellularLocation>
        <location evidence="5">Cell inner membrane</location>
        <topology evidence="5">Peripheral membrane protein</topology>
    </subcellularLocation>
    <text evidence="5">Loosely associated with the cytoplasmic membrane.</text>
</comment>
<comment type="induction">
    <text evidence="3">Induced 2.4-fold by hydroxyurea.</text>
</comment>
<comment type="domain">
    <text evidence="4">Globular monomeric protein mainly composed by alpha-helices sheltering internal cavities in a fold resembling the 'palm' domain found in siderophore biosynthetic enzymes.</text>
</comment>
<comment type="disruption phenotype">
    <text evidence="2">Removal of iron from coprogen, ferrichrome and ferrioxamine B is significantly lower in mutants compared to the corresponding parental strains.</text>
</comment>
<organism>
    <name type="scientific">Escherichia coli (strain K12)</name>
    <dbReference type="NCBI Taxonomy" id="83333"/>
    <lineage>
        <taxon>Bacteria</taxon>
        <taxon>Pseudomonadati</taxon>
        <taxon>Pseudomonadota</taxon>
        <taxon>Gammaproteobacteria</taxon>
        <taxon>Enterobacterales</taxon>
        <taxon>Enterobacteriaceae</taxon>
        <taxon>Escherichia</taxon>
    </lineage>
</organism>
<dbReference type="EMBL" id="U14003">
    <property type="protein sequence ID" value="AAA97266.1"/>
    <property type="molecule type" value="Genomic_DNA"/>
</dbReference>
<dbReference type="EMBL" id="U00096">
    <property type="protein sequence ID" value="AAC77323.1"/>
    <property type="molecule type" value="Genomic_DNA"/>
</dbReference>
<dbReference type="EMBL" id="AP009048">
    <property type="protein sequence ID" value="BAE78357.1"/>
    <property type="molecule type" value="Genomic_DNA"/>
</dbReference>
<dbReference type="PIR" id="S56594">
    <property type="entry name" value="S56594"/>
</dbReference>
<dbReference type="RefSeq" id="NP_418787.1">
    <property type="nucleotide sequence ID" value="NC_000913.3"/>
</dbReference>
<dbReference type="RefSeq" id="WP_000331618.1">
    <property type="nucleotide sequence ID" value="NZ_LN832404.1"/>
</dbReference>
<dbReference type="PDB" id="7QP5">
    <property type="method" value="X-ray"/>
    <property type="resolution" value="1.92 A"/>
    <property type="chains" value="A/B=18-262"/>
</dbReference>
<dbReference type="PDBsum" id="7QP5"/>
<dbReference type="SASBDB" id="P39405"/>
<dbReference type="SMR" id="P39405"/>
<dbReference type="BioGRID" id="4262784">
    <property type="interactions" value="8"/>
</dbReference>
<dbReference type="BioGRID" id="853168">
    <property type="interactions" value="14"/>
</dbReference>
<dbReference type="DIP" id="DIP-9607N"/>
<dbReference type="FunCoup" id="P39405">
    <property type="interactions" value="17"/>
</dbReference>
<dbReference type="IntAct" id="P39405">
    <property type="interactions" value="18"/>
</dbReference>
<dbReference type="STRING" id="511145.b4367"/>
<dbReference type="jPOST" id="P39405"/>
<dbReference type="PaxDb" id="511145-b4367"/>
<dbReference type="EnsemblBacteria" id="AAC77323">
    <property type="protein sequence ID" value="AAC77323"/>
    <property type="gene ID" value="b4367"/>
</dbReference>
<dbReference type="GeneID" id="948891"/>
<dbReference type="KEGG" id="ecj:JW4331"/>
<dbReference type="KEGG" id="eco:b4367"/>
<dbReference type="KEGG" id="ecoc:C3026_23590"/>
<dbReference type="PATRIC" id="fig|1411691.4.peg.2319"/>
<dbReference type="EchoBASE" id="EB2480"/>
<dbReference type="eggNOG" id="COG4114">
    <property type="taxonomic scope" value="Bacteria"/>
</dbReference>
<dbReference type="HOGENOM" id="CLU_088228_0_0_6"/>
<dbReference type="InParanoid" id="P39405"/>
<dbReference type="OMA" id="SPEHFHV"/>
<dbReference type="OrthoDB" id="5918327at2"/>
<dbReference type="PhylomeDB" id="P39405"/>
<dbReference type="BioCyc" id="EcoCyc:G7949-MONOMER"/>
<dbReference type="PRO" id="PR:P39405"/>
<dbReference type="Proteomes" id="UP000000625">
    <property type="component" value="Chromosome"/>
</dbReference>
<dbReference type="GO" id="GO:0005829">
    <property type="term" value="C:cytosol"/>
    <property type="evidence" value="ECO:0000314"/>
    <property type="project" value="EcoCyc"/>
</dbReference>
<dbReference type="GO" id="GO:0005886">
    <property type="term" value="C:plasma membrane"/>
    <property type="evidence" value="ECO:0007669"/>
    <property type="project" value="UniProtKB-SubCell"/>
</dbReference>
<dbReference type="GO" id="GO:0051537">
    <property type="term" value="F:2 iron, 2 sulfur cluster binding"/>
    <property type="evidence" value="ECO:0000314"/>
    <property type="project" value="EcoCyc"/>
</dbReference>
<dbReference type="GO" id="GO:0000293">
    <property type="term" value="F:ferric-chelate reductase activity"/>
    <property type="evidence" value="ECO:0000314"/>
    <property type="project" value="EcoCyc"/>
</dbReference>
<dbReference type="GO" id="GO:0046872">
    <property type="term" value="F:metal ion binding"/>
    <property type="evidence" value="ECO:0007669"/>
    <property type="project" value="UniProtKB-KW"/>
</dbReference>
<dbReference type="GO" id="GO:0016722">
    <property type="term" value="F:oxidoreductase activity, acting on metal ions"/>
    <property type="evidence" value="ECO:0000314"/>
    <property type="project" value="EcoCyc"/>
</dbReference>
<dbReference type="GO" id="GO:0033215">
    <property type="term" value="P:reductive iron assimilation"/>
    <property type="evidence" value="ECO:0000314"/>
    <property type="project" value="EcoCyc"/>
</dbReference>
<dbReference type="GO" id="GO:0033214">
    <property type="term" value="P:siderophore-dependent iron import into cell"/>
    <property type="evidence" value="ECO:0000315"/>
    <property type="project" value="EcoCyc"/>
</dbReference>
<dbReference type="InterPro" id="IPR008090">
    <property type="entry name" value="Fe_iron_reduct"/>
</dbReference>
<dbReference type="InterPro" id="IPR024726">
    <property type="entry name" value="FhuF_C"/>
</dbReference>
<dbReference type="InterPro" id="IPR022770">
    <property type="entry name" value="IucA/IucC-like_C"/>
</dbReference>
<dbReference type="NCBIfam" id="TIGR03951">
    <property type="entry name" value="Fe_III_red_FhuF"/>
    <property type="match status" value="1"/>
</dbReference>
<dbReference type="NCBIfam" id="NF007932">
    <property type="entry name" value="PRK10647.1"/>
    <property type="match status" value="1"/>
</dbReference>
<dbReference type="Pfam" id="PF06276">
    <property type="entry name" value="FhuF"/>
    <property type="match status" value="1"/>
</dbReference>
<dbReference type="Pfam" id="PF11575">
    <property type="entry name" value="FhuF_C"/>
    <property type="match status" value="1"/>
</dbReference>
<dbReference type="PRINTS" id="PR01714">
    <property type="entry name" value="2FE2SRDCTASE"/>
</dbReference>